<reference key="1">
    <citation type="journal article" date="2003" name="J. Bacteriol.">
        <title>Complete genome sequence of the oral pathogenic bacterium Porphyromonas gingivalis strain W83.</title>
        <authorList>
            <person name="Nelson K.E."/>
            <person name="Fleischmann R.D."/>
            <person name="DeBoy R.T."/>
            <person name="Paulsen I.T."/>
            <person name="Fouts D.E."/>
            <person name="Eisen J.A."/>
            <person name="Daugherty S.C."/>
            <person name="Dodson R.J."/>
            <person name="Durkin A.S."/>
            <person name="Gwinn M.L."/>
            <person name="Haft D.H."/>
            <person name="Kolonay J.F."/>
            <person name="Nelson W.C."/>
            <person name="Mason T.M."/>
            <person name="Tallon L."/>
            <person name="Gray J."/>
            <person name="Granger D."/>
            <person name="Tettelin H."/>
            <person name="Dong H."/>
            <person name="Galvin J.L."/>
            <person name="Duncan M.J."/>
            <person name="Dewhirst F.E."/>
            <person name="Fraser C.M."/>
        </authorList>
    </citation>
    <scope>NUCLEOTIDE SEQUENCE [LARGE SCALE GENOMIC DNA]</scope>
    <source>
        <strain>ATCC BAA-308 / W83</strain>
    </source>
</reference>
<accession>Q7MTM7</accession>
<evidence type="ECO:0000255" key="1">
    <source>
        <dbReference type="HAMAP-Rule" id="MF_01302"/>
    </source>
</evidence>
<evidence type="ECO:0000305" key="2"/>
<dbReference type="EMBL" id="AE015924">
    <property type="protein sequence ID" value="AAQ66905.1"/>
    <property type="molecule type" value="Genomic_DNA"/>
</dbReference>
<dbReference type="RefSeq" id="WP_010956444.1">
    <property type="nucleotide sequence ID" value="NC_002950.2"/>
</dbReference>
<dbReference type="SMR" id="Q7MTM7"/>
<dbReference type="STRING" id="242619.PG_1924"/>
<dbReference type="EnsemblBacteria" id="AAQ66905">
    <property type="protein sequence ID" value="AAQ66905"/>
    <property type="gene ID" value="PG_1924"/>
</dbReference>
<dbReference type="GeneID" id="29257005"/>
<dbReference type="GeneID" id="57239582"/>
<dbReference type="KEGG" id="pgi:PG_1924"/>
<dbReference type="eggNOG" id="COG0096">
    <property type="taxonomic scope" value="Bacteria"/>
</dbReference>
<dbReference type="HOGENOM" id="CLU_098428_0_2_10"/>
<dbReference type="Proteomes" id="UP000000588">
    <property type="component" value="Chromosome"/>
</dbReference>
<dbReference type="GO" id="GO:1990904">
    <property type="term" value="C:ribonucleoprotein complex"/>
    <property type="evidence" value="ECO:0007669"/>
    <property type="project" value="UniProtKB-KW"/>
</dbReference>
<dbReference type="GO" id="GO:0005840">
    <property type="term" value="C:ribosome"/>
    <property type="evidence" value="ECO:0007669"/>
    <property type="project" value="UniProtKB-KW"/>
</dbReference>
<dbReference type="GO" id="GO:0019843">
    <property type="term" value="F:rRNA binding"/>
    <property type="evidence" value="ECO:0007669"/>
    <property type="project" value="UniProtKB-UniRule"/>
</dbReference>
<dbReference type="GO" id="GO:0003735">
    <property type="term" value="F:structural constituent of ribosome"/>
    <property type="evidence" value="ECO:0007669"/>
    <property type="project" value="InterPro"/>
</dbReference>
<dbReference type="GO" id="GO:0006412">
    <property type="term" value="P:translation"/>
    <property type="evidence" value="ECO:0007669"/>
    <property type="project" value="UniProtKB-UniRule"/>
</dbReference>
<dbReference type="FunFam" id="3.30.1370.30:FF:000002">
    <property type="entry name" value="30S ribosomal protein S8"/>
    <property type="match status" value="1"/>
</dbReference>
<dbReference type="FunFam" id="3.30.1490.10:FF:000001">
    <property type="entry name" value="30S ribosomal protein S8"/>
    <property type="match status" value="1"/>
</dbReference>
<dbReference type="Gene3D" id="3.30.1370.30">
    <property type="match status" value="1"/>
</dbReference>
<dbReference type="Gene3D" id="3.30.1490.10">
    <property type="match status" value="1"/>
</dbReference>
<dbReference type="HAMAP" id="MF_01302_B">
    <property type="entry name" value="Ribosomal_uS8_B"/>
    <property type="match status" value="1"/>
</dbReference>
<dbReference type="InterPro" id="IPR000630">
    <property type="entry name" value="Ribosomal_uS8"/>
</dbReference>
<dbReference type="InterPro" id="IPR047863">
    <property type="entry name" value="Ribosomal_uS8_CS"/>
</dbReference>
<dbReference type="InterPro" id="IPR035987">
    <property type="entry name" value="Ribosomal_uS8_sf"/>
</dbReference>
<dbReference type="NCBIfam" id="NF001109">
    <property type="entry name" value="PRK00136.1"/>
    <property type="match status" value="1"/>
</dbReference>
<dbReference type="PANTHER" id="PTHR11758">
    <property type="entry name" value="40S RIBOSOMAL PROTEIN S15A"/>
    <property type="match status" value="1"/>
</dbReference>
<dbReference type="Pfam" id="PF00410">
    <property type="entry name" value="Ribosomal_S8"/>
    <property type="match status" value="1"/>
</dbReference>
<dbReference type="SUPFAM" id="SSF56047">
    <property type="entry name" value="Ribosomal protein S8"/>
    <property type="match status" value="1"/>
</dbReference>
<dbReference type="PROSITE" id="PS00053">
    <property type="entry name" value="RIBOSOMAL_S8"/>
    <property type="match status" value="1"/>
</dbReference>
<comment type="function">
    <text evidence="1">One of the primary rRNA binding proteins, it binds directly to 16S rRNA central domain where it helps coordinate assembly of the platform of the 30S subunit.</text>
</comment>
<comment type="subunit">
    <text evidence="1">Part of the 30S ribosomal subunit. Contacts proteins S5 and S12.</text>
</comment>
<comment type="similarity">
    <text evidence="1">Belongs to the universal ribosomal protein uS8 family.</text>
</comment>
<sequence>MTDPIADYLTRLRNAIMAGHRVVSVPASNIKKEITKILFDKGYILNYKFEENDSQGIIKVALKYDLAHKVNAIKKLKRVSRPGLRKYVGYRDMPRVLNGLGIAIVSTPRGVMTDKEARELKVGGEVLCYVY</sequence>
<feature type="chain" id="PRO_0000126461" description="Small ribosomal subunit protein uS8">
    <location>
        <begin position="1"/>
        <end position="131"/>
    </location>
</feature>
<organism>
    <name type="scientific">Porphyromonas gingivalis (strain ATCC BAA-308 / W83)</name>
    <dbReference type="NCBI Taxonomy" id="242619"/>
    <lineage>
        <taxon>Bacteria</taxon>
        <taxon>Pseudomonadati</taxon>
        <taxon>Bacteroidota</taxon>
        <taxon>Bacteroidia</taxon>
        <taxon>Bacteroidales</taxon>
        <taxon>Porphyromonadaceae</taxon>
        <taxon>Porphyromonas</taxon>
    </lineage>
</organism>
<gene>
    <name evidence="1" type="primary">rpsH</name>
    <name type="ordered locus">PG_1924</name>
</gene>
<keyword id="KW-1185">Reference proteome</keyword>
<keyword id="KW-0687">Ribonucleoprotein</keyword>
<keyword id="KW-0689">Ribosomal protein</keyword>
<keyword id="KW-0694">RNA-binding</keyword>
<keyword id="KW-0699">rRNA-binding</keyword>
<name>RS8_PORGI</name>
<protein>
    <recommendedName>
        <fullName evidence="1">Small ribosomal subunit protein uS8</fullName>
    </recommendedName>
    <alternativeName>
        <fullName evidence="2">30S ribosomal protein S8</fullName>
    </alternativeName>
</protein>
<proteinExistence type="inferred from homology"/>